<dbReference type="EC" id="3.6.5.2" evidence="4"/>
<dbReference type="EMBL" id="DQ325522">
    <property type="protein sequence ID" value="ABC55723.1"/>
    <property type="molecule type" value="mRNA"/>
</dbReference>
<dbReference type="RefSeq" id="NP_001038002.1">
    <property type="nucleotide sequence ID" value="NM_001044537.1"/>
</dbReference>
<dbReference type="SMR" id="Q2MJK3"/>
<dbReference type="FunCoup" id="Q2MJK3">
    <property type="interactions" value="1951"/>
</dbReference>
<dbReference type="STRING" id="9823.ENSSSCP00000046185"/>
<dbReference type="PaxDb" id="9823-ENSSSCP00000007203"/>
<dbReference type="PeptideAtlas" id="Q2MJK3"/>
<dbReference type="Ensembl" id="ENSSSCT00000038488.2">
    <property type="protein sequence ID" value="ENSSSCP00000046185.1"/>
    <property type="gene ID" value="ENSSSCG00000032477.2"/>
</dbReference>
<dbReference type="Ensembl" id="ENSSSCT00015088424.1">
    <property type="protein sequence ID" value="ENSSSCP00015036059.1"/>
    <property type="gene ID" value="ENSSSCG00015065826.1"/>
</dbReference>
<dbReference type="Ensembl" id="ENSSSCT00025020871.1">
    <property type="protein sequence ID" value="ENSSSCP00025008582.1"/>
    <property type="gene ID" value="ENSSSCG00025015558.1"/>
</dbReference>
<dbReference type="Ensembl" id="ENSSSCT00030071584.1">
    <property type="protein sequence ID" value="ENSSSCP00030032626.1"/>
    <property type="gene ID" value="ENSSSCG00030051390.1"/>
</dbReference>
<dbReference type="Ensembl" id="ENSSSCT00035052241.1">
    <property type="protein sequence ID" value="ENSSSCP00035021001.1"/>
    <property type="gene ID" value="ENSSSCG00035039325.1"/>
</dbReference>
<dbReference type="Ensembl" id="ENSSSCT00040026984.1">
    <property type="protein sequence ID" value="ENSSSCP00040011402.1"/>
    <property type="gene ID" value="ENSSSCG00040019987.1"/>
</dbReference>
<dbReference type="Ensembl" id="ENSSSCT00045016798.1">
    <property type="protein sequence ID" value="ENSSSCP00045011590.1"/>
    <property type="gene ID" value="ENSSSCG00045009917.1"/>
</dbReference>
<dbReference type="Ensembl" id="ENSSSCT00050054942.1">
    <property type="protein sequence ID" value="ENSSSCP00050023236.1"/>
    <property type="gene ID" value="ENSSSCG00050040592.1"/>
</dbReference>
<dbReference type="Ensembl" id="ENSSSCT00055024396.1">
    <property type="protein sequence ID" value="ENSSSCP00055019361.1"/>
    <property type="gene ID" value="ENSSSCG00055012395.1"/>
</dbReference>
<dbReference type="Ensembl" id="ENSSSCT00060096238.1">
    <property type="protein sequence ID" value="ENSSSCP00060041641.1"/>
    <property type="gene ID" value="ENSSSCG00060070493.1"/>
</dbReference>
<dbReference type="Ensembl" id="ENSSSCT00065040494.1">
    <property type="protein sequence ID" value="ENSSSCP00065017119.1"/>
    <property type="gene ID" value="ENSSSCG00065029998.1"/>
</dbReference>
<dbReference type="Ensembl" id="ENSSSCT00070009201.1">
    <property type="protein sequence ID" value="ENSSSCP00070007551.1"/>
    <property type="gene ID" value="ENSSSCG00070004868.1"/>
</dbReference>
<dbReference type="Ensembl" id="ENSSSCT00090026959">
    <property type="protein sequence ID" value="ENSSSCP00090016584"/>
    <property type="gene ID" value="ENSSSCG00090015360"/>
</dbReference>
<dbReference type="Ensembl" id="ENSSSCT00105018348">
    <property type="protein sequence ID" value="ENSSSCP00105013065"/>
    <property type="gene ID" value="ENSSSCG00105009249"/>
</dbReference>
<dbReference type="Ensembl" id="ENSSSCT00110046956">
    <property type="protein sequence ID" value="ENSSSCP00110032989"/>
    <property type="gene ID" value="ENSSSCG00110024314"/>
</dbReference>
<dbReference type="Ensembl" id="ENSSSCT00115038072">
    <property type="protein sequence ID" value="ENSSSCP00115035956"/>
    <property type="gene ID" value="ENSSSCG00115021494"/>
</dbReference>
<dbReference type="Ensembl" id="ENSSSCT00130062577">
    <property type="protein sequence ID" value="ENSSSCP00130044841"/>
    <property type="gene ID" value="ENSSSCG00130032046"/>
</dbReference>
<dbReference type="GeneID" id="100739349"/>
<dbReference type="KEGG" id="ssc:100739349"/>
<dbReference type="CTD" id="4893"/>
<dbReference type="VGNC" id="VGNC:98827">
    <property type="gene designation" value="NRAS"/>
</dbReference>
<dbReference type="eggNOG" id="KOG0395">
    <property type="taxonomic scope" value="Eukaryota"/>
</dbReference>
<dbReference type="GeneTree" id="ENSGT00940000158947"/>
<dbReference type="HOGENOM" id="CLU_041217_9_8_1"/>
<dbReference type="InParanoid" id="Q2MJK3"/>
<dbReference type="OMA" id="RAVDIWG"/>
<dbReference type="OrthoDB" id="5976022at2759"/>
<dbReference type="TreeFam" id="TF312796"/>
<dbReference type="Reactome" id="R-SSC-1169092">
    <property type="pathway name" value="Activation of RAS in B cells"/>
</dbReference>
<dbReference type="Reactome" id="R-SSC-1250347">
    <property type="pathway name" value="SHC1 events in ERBB4 signaling"/>
</dbReference>
<dbReference type="Reactome" id="R-SSC-1433557">
    <property type="pathway name" value="Signaling by SCF-KIT"/>
</dbReference>
<dbReference type="Reactome" id="R-SSC-171007">
    <property type="pathway name" value="p38MAPK events"/>
</dbReference>
<dbReference type="Reactome" id="R-SSC-179812">
    <property type="pathway name" value="GRB2 events in EGFR signaling"/>
</dbReference>
<dbReference type="Reactome" id="R-SSC-180336">
    <property type="pathway name" value="SHC1 events in EGFR signaling"/>
</dbReference>
<dbReference type="Reactome" id="R-SSC-186763">
    <property type="pathway name" value="Downstream signal transduction"/>
</dbReference>
<dbReference type="Reactome" id="R-SSC-1963640">
    <property type="pathway name" value="GRB2 events in ERBB2 signaling"/>
</dbReference>
<dbReference type="Reactome" id="R-SSC-210993">
    <property type="pathway name" value="Tie2 Signaling"/>
</dbReference>
<dbReference type="Reactome" id="R-SSC-2179392">
    <property type="pathway name" value="EGFR Transactivation by Gastrin"/>
</dbReference>
<dbReference type="Reactome" id="R-SSC-2424491">
    <property type="pathway name" value="DAP12 signaling"/>
</dbReference>
<dbReference type="Reactome" id="R-SSC-2871796">
    <property type="pathway name" value="FCERI mediated MAPK activation"/>
</dbReference>
<dbReference type="Reactome" id="R-SSC-375165">
    <property type="pathway name" value="NCAM signaling for neurite out-growth"/>
</dbReference>
<dbReference type="Reactome" id="R-SSC-5218921">
    <property type="pathway name" value="VEGFR2 mediated cell proliferation"/>
</dbReference>
<dbReference type="Reactome" id="R-SSC-5654688">
    <property type="pathway name" value="SHC-mediated cascade:FGFR1"/>
</dbReference>
<dbReference type="Reactome" id="R-SSC-5654693">
    <property type="pathway name" value="FRS-mediated FGFR1 signaling"/>
</dbReference>
<dbReference type="Reactome" id="R-SSC-5654699">
    <property type="pathway name" value="SHC-mediated cascade:FGFR2"/>
</dbReference>
<dbReference type="Reactome" id="R-SSC-5654700">
    <property type="pathway name" value="FRS-mediated FGFR2 signaling"/>
</dbReference>
<dbReference type="Reactome" id="R-SSC-5654704">
    <property type="pathway name" value="SHC-mediated cascade:FGFR3"/>
</dbReference>
<dbReference type="Reactome" id="R-SSC-5654706">
    <property type="pathway name" value="FRS-mediated FGFR3 signaling"/>
</dbReference>
<dbReference type="Reactome" id="R-SSC-5654712">
    <property type="pathway name" value="FRS-mediated FGFR4 signaling"/>
</dbReference>
<dbReference type="Reactome" id="R-SSC-5654719">
    <property type="pathway name" value="SHC-mediated cascade:FGFR4"/>
</dbReference>
<dbReference type="Reactome" id="R-SSC-5658442">
    <property type="pathway name" value="Regulation of RAS by GAPs"/>
</dbReference>
<dbReference type="Reactome" id="R-SSC-5673000">
    <property type="pathway name" value="RAF activation"/>
</dbReference>
<dbReference type="Reactome" id="R-SSC-5673001">
    <property type="pathway name" value="RAF/MAP kinase cascade"/>
</dbReference>
<dbReference type="Reactome" id="R-SSC-5674135">
    <property type="pathway name" value="MAP2K and MAPK activation"/>
</dbReference>
<dbReference type="Reactome" id="R-SSC-5675221">
    <property type="pathway name" value="Negative regulation of MAPK pathway"/>
</dbReference>
<dbReference type="Reactome" id="R-SSC-6798695">
    <property type="pathway name" value="Neutrophil degranulation"/>
</dbReference>
<dbReference type="Reactome" id="R-SSC-8849471">
    <property type="pathway name" value="PTK6 Regulates RHO GTPases, RAS GTPase and MAP kinases"/>
</dbReference>
<dbReference type="Reactome" id="R-SSC-8851805">
    <property type="pathway name" value="MET activates RAS signaling"/>
</dbReference>
<dbReference type="Reactome" id="R-SSC-9607240">
    <property type="pathway name" value="FLT3 Signaling"/>
</dbReference>
<dbReference type="Reactome" id="R-SSC-9634635">
    <property type="pathway name" value="Estrogen-stimulated signaling through PRKCZ"/>
</dbReference>
<dbReference type="Reactome" id="R-SSC-9648002">
    <property type="pathway name" value="RAS processing"/>
</dbReference>
<dbReference type="Proteomes" id="UP000008227">
    <property type="component" value="Chromosome 4"/>
</dbReference>
<dbReference type="Proteomes" id="UP000314985">
    <property type="component" value="Chromosome 4"/>
</dbReference>
<dbReference type="Proteomes" id="UP000694570">
    <property type="component" value="Unplaced"/>
</dbReference>
<dbReference type="Proteomes" id="UP000694571">
    <property type="component" value="Unplaced"/>
</dbReference>
<dbReference type="Proteomes" id="UP000694720">
    <property type="component" value="Unplaced"/>
</dbReference>
<dbReference type="Proteomes" id="UP000694722">
    <property type="component" value="Unplaced"/>
</dbReference>
<dbReference type="Proteomes" id="UP000694723">
    <property type="component" value="Unplaced"/>
</dbReference>
<dbReference type="Proteomes" id="UP000694724">
    <property type="component" value="Unplaced"/>
</dbReference>
<dbReference type="Proteomes" id="UP000694725">
    <property type="component" value="Unplaced"/>
</dbReference>
<dbReference type="Proteomes" id="UP000694726">
    <property type="component" value="Unplaced"/>
</dbReference>
<dbReference type="Proteomes" id="UP000694727">
    <property type="component" value="Unplaced"/>
</dbReference>
<dbReference type="Proteomes" id="UP000694728">
    <property type="component" value="Unplaced"/>
</dbReference>
<dbReference type="Bgee" id="ENSSSCG00000032477">
    <property type="expression patterns" value="Expressed in penis and 45 other cell types or tissues"/>
</dbReference>
<dbReference type="GO" id="GO:0000139">
    <property type="term" value="C:Golgi membrane"/>
    <property type="evidence" value="ECO:0007669"/>
    <property type="project" value="UniProtKB-SubCell"/>
</dbReference>
<dbReference type="GO" id="GO:0005886">
    <property type="term" value="C:plasma membrane"/>
    <property type="evidence" value="ECO:0000318"/>
    <property type="project" value="GO_Central"/>
</dbReference>
<dbReference type="GO" id="GO:0003925">
    <property type="term" value="F:G protein activity"/>
    <property type="evidence" value="ECO:0007669"/>
    <property type="project" value="UniProtKB-EC"/>
</dbReference>
<dbReference type="GO" id="GO:0019003">
    <property type="term" value="F:GDP binding"/>
    <property type="evidence" value="ECO:0000318"/>
    <property type="project" value="GO_Central"/>
</dbReference>
<dbReference type="GO" id="GO:0005525">
    <property type="term" value="F:GTP binding"/>
    <property type="evidence" value="ECO:0000318"/>
    <property type="project" value="GO_Central"/>
</dbReference>
<dbReference type="GO" id="GO:0003924">
    <property type="term" value="F:GTPase activity"/>
    <property type="evidence" value="ECO:0000250"/>
    <property type="project" value="UniProtKB"/>
</dbReference>
<dbReference type="GO" id="GO:0044877">
    <property type="term" value="F:protein-containing complex binding"/>
    <property type="evidence" value="ECO:0007669"/>
    <property type="project" value="Ensembl"/>
</dbReference>
<dbReference type="GO" id="GO:0001938">
    <property type="term" value="P:positive regulation of endothelial cell proliferation"/>
    <property type="evidence" value="ECO:0007669"/>
    <property type="project" value="Ensembl"/>
</dbReference>
<dbReference type="GO" id="GO:0007265">
    <property type="term" value="P:Ras protein signal transduction"/>
    <property type="evidence" value="ECO:0000250"/>
    <property type="project" value="UniProtKB"/>
</dbReference>
<dbReference type="CDD" id="cd04138">
    <property type="entry name" value="H_N_K_Ras_like"/>
    <property type="match status" value="1"/>
</dbReference>
<dbReference type="FunFam" id="3.40.50.300:FF:000096">
    <property type="entry name" value="KRAS proto-oncogene, GTPase"/>
    <property type="match status" value="1"/>
</dbReference>
<dbReference type="Gene3D" id="3.40.50.300">
    <property type="entry name" value="P-loop containing nucleotide triphosphate hydrolases"/>
    <property type="match status" value="1"/>
</dbReference>
<dbReference type="InterPro" id="IPR027417">
    <property type="entry name" value="P-loop_NTPase"/>
</dbReference>
<dbReference type="InterPro" id="IPR005225">
    <property type="entry name" value="Small_GTP-bd"/>
</dbReference>
<dbReference type="InterPro" id="IPR001806">
    <property type="entry name" value="Small_GTPase"/>
</dbReference>
<dbReference type="InterPro" id="IPR020849">
    <property type="entry name" value="Small_GTPase_Ras-type"/>
</dbReference>
<dbReference type="NCBIfam" id="TIGR00231">
    <property type="entry name" value="small_GTP"/>
    <property type="match status" value="1"/>
</dbReference>
<dbReference type="PANTHER" id="PTHR24070">
    <property type="entry name" value="RAS, DI-RAS, AND RHEB FAMILY MEMBERS OF SMALL GTPASE SUPERFAMILY"/>
    <property type="match status" value="1"/>
</dbReference>
<dbReference type="Pfam" id="PF00071">
    <property type="entry name" value="Ras"/>
    <property type="match status" value="1"/>
</dbReference>
<dbReference type="PRINTS" id="PR00449">
    <property type="entry name" value="RASTRNSFRMNG"/>
</dbReference>
<dbReference type="SMART" id="SM00175">
    <property type="entry name" value="RAB"/>
    <property type="match status" value="1"/>
</dbReference>
<dbReference type="SMART" id="SM00173">
    <property type="entry name" value="RAS"/>
    <property type="match status" value="1"/>
</dbReference>
<dbReference type="SMART" id="SM00174">
    <property type="entry name" value="RHO"/>
    <property type="match status" value="1"/>
</dbReference>
<dbReference type="SUPFAM" id="SSF52540">
    <property type="entry name" value="P-loop containing nucleoside triphosphate hydrolases"/>
    <property type="match status" value="1"/>
</dbReference>
<dbReference type="PROSITE" id="PS51421">
    <property type="entry name" value="RAS"/>
    <property type="match status" value="1"/>
</dbReference>
<accession>Q2MJK3</accession>
<gene>
    <name type="primary">NRAS</name>
</gene>
<evidence type="ECO:0000250" key="1"/>
<evidence type="ECO:0000250" key="2">
    <source>
        <dbReference type="UniProtKB" id="P01111"/>
    </source>
</evidence>
<evidence type="ECO:0000250" key="3">
    <source>
        <dbReference type="UniProtKB" id="P01112"/>
    </source>
</evidence>
<evidence type="ECO:0000250" key="4">
    <source>
        <dbReference type="UniProtKB" id="P01116"/>
    </source>
</evidence>
<evidence type="ECO:0000250" key="5">
    <source>
        <dbReference type="UniProtKB" id="Q04970"/>
    </source>
</evidence>
<evidence type="ECO:0000255" key="6"/>
<evidence type="ECO:0000305" key="7"/>
<proteinExistence type="evidence at transcript level"/>
<comment type="function">
    <text evidence="2">Ras proteins bind GDP/GTP and possess intrinsic GTPase activity.</text>
</comment>
<comment type="catalytic activity">
    <reaction evidence="4">
        <text>GTP + H2O = GDP + phosphate + H(+)</text>
        <dbReference type="Rhea" id="RHEA:19669"/>
        <dbReference type="ChEBI" id="CHEBI:15377"/>
        <dbReference type="ChEBI" id="CHEBI:15378"/>
        <dbReference type="ChEBI" id="CHEBI:37565"/>
        <dbReference type="ChEBI" id="CHEBI:43474"/>
        <dbReference type="ChEBI" id="CHEBI:58189"/>
        <dbReference type="EC" id="3.6.5.2"/>
    </reaction>
</comment>
<comment type="activity regulation">
    <text evidence="1">Alternates between an inactive form bound to GDP and an active form bound to GTP. Activated by a guanine nucleotide-exchange factor (GEF) and inactivated by a GTPase-activating protein (GAP) (By similarity).</text>
</comment>
<comment type="subunit">
    <text evidence="2 5">Interacts (active GTP-bound form preferentially) with RGS14 (By similarity). Interacts (active GTP-bound form) with RASSF7 (By similarity). Interacts (active GTP-bound form) with both SHOC2 and PP1c (all isoforms) to form a tertiary complex; SHOC2 and PP1c preferably bind M-Ras/MRAS, but they also bind K-Ras/KRAS, N-Ras/NRAS and H-Ras/HRAS (By similarity).</text>
</comment>
<comment type="subcellular location">
    <subcellularLocation>
        <location evidence="2">Cell membrane</location>
        <topology evidence="2">Lipid-anchor</topology>
        <orientation evidence="2">Cytoplasmic side</orientation>
    </subcellularLocation>
    <subcellularLocation>
        <location evidence="2">Golgi apparatus membrane</location>
        <topology evidence="2">Lipid-anchor</topology>
    </subcellularLocation>
    <text evidence="2">Shuttles between the plasma membrane and the Golgi apparatus.</text>
</comment>
<comment type="PTM">
    <text evidence="2">Palmitoylated by the ZDHHC9-GOLGA7 complex. Depalmitoylated by ABHD17A, ABHD17B and ABHD17C. A continuous cycle of de- and re-palmitoylation regulates rapid exchange between plasma membrane and Golgi.</text>
</comment>
<comment type="PTM">
    <text evidence="4">Acetylation at Lys-104 prevents interaction with guanine nucleotide exchange factors (GEFs).</text>
</comment>
<comment type="PTM">
    <text evidence="3">Ubiquitinated by the BCR(LZTR1) E3 ubiquitin ligase complex at Lys-170 in a non-degradative manner, leading to inhibit Ras signaling by decreasing Ras association with membranes.</text>
</comment>
<comment type="PTM">
    <text evidence="2">Phosphorylation at Ser-89 enhances NRAS association with its downstream effectors.</text>
</comment>
<comment type="similarity">
    <text evidence="7">Belongs to the small GTPase superfamily. Ras family.</text>
</comment>
<reference key="1">
    <citation type="submission" date="2005-12" db="EMBL/GenBank/DDBJ databases">
        <title>Isolation, sequence analysis and expression profile of a novel swine gene.</title>
        <authorList>
            <person name="Xie H.T."/>
            <person name="Xiong Y.Z."/>
            <person name="Lei M.G."/>
            <person name="Xu D.Q."/>
        </authorList>
    </citation>
    <scope>NUCLEOTIDE SEQUENCE [MRNA]</scope>
    <source>
        <tissue>Muscle</tissue>
    </source>
</reference>
<organism>
    <name type="scientific">Sus scrofa</name>
    <name type="common">Pig</name>
    <dbReference type="NCBI Taxonomy" id="9823"/>
    <lineage>
        <taxon>Eukaryota</taxon>
        <taxon>Metazoa</taxon>
        <taxon>Chordata</taxon>
        <taxon>Craniata</taxon>
        <taxon>Vertebrata</taxon>
        <taxon>Euteleostomi</taxon>
        <taxon>Mammalia</taxon>
        <taxon>Eutheria</taxon>
        <taxon>Laurasiatheria</taxon>
        <taxon>Artiodactyla</taxon>
        <taxon>Suina</taxon>
        <taxon>Suidae</taxon>
        <taxon>Sus</taxon>
    </lineage>
</organism>
<feature type="chain" id="PRO_0000261123" description="GTPase NRas">
    <location>
        <begin position="1"/>
        <end position="186"/>
    </location>
</feature>
<feature type="propeptide" id="PRO_0000261124" description="Removed in mature form" evidence="1">
    <location>
        <begin position="187"/>
        <end position="189"/>
    </location>
</feature>
<feature type="region of interest" description="Hypervariable region" evidence="1">
    <location>
        <begin position="166"/>
        <end position="185"/>
    </location>
</feature>
<feature type="short sequence motif" description="Effector region">
    <location>
        <begin position="32"/>
        <end position="40"/>
    </location>
</feature>
<feature type="binding site" evidence="2">
    <location>
        <begin position="10"/>
        <end position="18"/>
    </location>
    <ligand>
        <name>GTP</name>
        <dbReference type="ChEBI" id="CHEBI:37565"/>
    </ligand>
</feature>
<feature type="binding site" evidence="2">
    <location>
        <begin position="29"/>
        <end position="30"/>
    </location>
    <ligand>
        <name>GTP</name>
        <dbReference type="ChEBI" id="CHEBI:37565"/>
    </ligand>
</feature>
<feature type="binding site" evidence="6">
    <location>
        <begin position="57"/>
        <end position="61"/>
    </location>
    <ligand>
        <name>GTP</name>
        <dbReference type="ChEBI" id="CHEBI:37565"/>
    </ligand>
</feature>
<feature type="binding site" evidence="2">
    <location>
        <begin position="116"/>
        <end position="119"/>
    </location>
    <ligand>
        <name>GTP</name>
        <dbReference type="ChEBI" id="CHEBI:37565"/>
    </ligand>
</feature>
<feature type="modified residue" description="Phosphoserine" evidence="2">
    <location>
        <position position="89"/>
    </location>
</feature>
<feature type="lipid moiety-binding region" description="S-palmitoyl cysteine" evidence="2">
    <location>
        <position position="181"/>
    </location>
</feature>
<feature type="lipid moiety-binding region" description="S-farnesyl cysteine" evidence="2">
    <location>
        <position position="186"/>
    </location>
</feature>
<feature type="cross-link" description="Glycyl lysine isopeptide (Lys-Gly) (interchain with G-Cter in ubiquitin)" evidence="2">
    <location>
        <position position="170"/>
    </location>
</feature>
<protein>
    <recommendedName>
        <fullName>GTPase NRas</fullName>
        <ecNumber evidence="4">3.6.5.2</ecNumber>
    </recommendedName>
    <alternativeName>
        <fullName>Transforming protein N-Ras</fullName>
    </alternativeName>
</protein>
<name>RASN_PIG</name>
<keyword id="KW-0007">Acetylation</keyword>
<keyword id="KW-1003">Cell membrane</keyword>
<keyword id="KW-0333">Golgi apparatus</keyword>
<keyword id="KW-0342">GTP-binding</keyword>
<keyword id="KW-0378">Hydrolase</keyword>
<keyword id="KW-1017">Isopeptide bond</keyword>
<keyword id="KW-0449">Lipoprotein</keyword>
<keyword id="KW-0472">Membrane</keyword>
<keyword id="KW-0488">Methylation</keyword>
<keyword id="KW-0547">Nucleotide-binding</keyword>
<keyword id="KW-0564">Palmitate</keyword>
<keyword id="KW-0597">Phosphoprotein</keyword>
<keyword id="KW-0636">Prenylation</keyword>
<keyword id="KW-0656">Proto-oncogene</keyword>
<keyword id="KW-1185">Reference proteome</keyword>
<keyword id="KW-0832">Ubl conjugation</keyword>
<sequence length="189" mass="21229">MTEYKLVVVGAGGVGKSALTIQLIQNHFVDEYDPTIEDSYRKQVVIDGETCLLDILDTAGQEEYSAMRDQYMRTGEGFLCVFAINNSKSFADINLYREQIKRVKDSDDVPMVLVGNKCDLPTRTVDTKQAHELAKSYGIPFIETSAKTRQGVEDAFYTLVREIRQYRMKKLNSSDDGTQGCMGLPCVVM</sequence>